<feature type="chain" id="PRO_0000296042" description="Small ribosomal subunit protein uS12">
    <location>
        <begin position="1"/>
        <end position="125"/>
    </location>
</feature>
<feature type="region of interest" description="Disordered" evidence="3">
    <location>
        <begin position="9"/>
        <end position="31"/>
    </location>
</feature>
<feature type="modified residue" description="3-methylthioaspartic acid" evidence="1">
    <location>
        <position position="89"/>
    </location>
</feature>
<dbReference type="EMBL" id="CP000542">
    <property type="protein sequence ID" value="ABM57027.1"/>
    <property type="molecule type" value="Genomic_DNA"/>
</dbReference>
<dbReference type="RefSeq" id="WP_011809038.1">
    <property type="nucleotide sequence ID" value="NC_008786.1"/>
</dbReference>
<dbReference type="SMR" id="A1WHC0"/>
<dbReference type="STRING" id="391735.Veis_1259"/>
<dbReference type="GeneID" id="76459906"/>
<dbReference type="KEGG" id="vei:Veis_1259"/>
<dbReference type="eggNOG" id="COG0048">
    <property type="taxonomic scope" value="Bacteria"/>
</dbReference>
<dbReference type="HOGENOM" id="CLU_104295_1_2_4"/>
<dbReference type="OrthoDB" id="9802366at2"/>
<dbReference type="Proteomes" id="UP000000374">
    <property type="component" value="Chromosome"/>
</dbReference>
<dbReference type="GO" id="GO:0015935">
    <property type="term" value="C:small ribosomal subunit"/>
    <property type="evidence" value="ECO:0007669"/>
    <property type="project" value="InterPro"/>
</dbReference>
<dbReference type="GO" id="GO:0019843">
    <property type="term" value="F:rRNA binding"/>
    <property type="evidence" value="ECO:0007669"/>
    <property type="project" value="UniProtKB-UniRule"/>
</dbReference>
<dbReference type="GO" id="GO:0003735">
    <property type="term" value="F:structural constituent of ribosome"/>
    <property type="evidence" value="ECO:0007669"/>
    <property type="project" value="InterPro"/>
</dbReference>
<dbReference type="GO" id="GO:0000049">
    <property type="term" value="F:tRNA binding"/>
    <property type="evidence" value="ECO:0007669"/>
    <property type="project" value="UniProtKB-UniRule"/>
</dbReference>
<dbReference type="GO" id="GO:0006412">
    <property type="term" value="P:translation"/>
    <property type="evidence" value="ECO:0007669"/>
    <property type="project" value="UniProtKB-UniRule"/>
</dbReference>
<dbReference type="CDD" id="cd03368">
    <property type="entry name" value="Ribosomal_S12"/>
    <property type="match status" value="1"/>
</dbReference>
<dbReference type="FunFam" id="2.40.50.140:FF:000001">
    <property type="entry name" value="30S ribosomal protein S12"/>
    <property type="match status" value="1"/>
</dbReference>
<dbReference type="Gene3D" id="2.40.50.140">
    <property type="entry name" value="Nucleic acid-binding proteins"/>
    <property type="match status" value="1"/>
</dbReference>
<dbReference type="HAMAP" id="MF_00403_B">
    <property type="entry name" value="Ribosomal_uS12_B"/>
    <property type="match status" value="1"/>
</dbReference>
<dbReference type="InterPro" id="IPR012340">
    <property type="entry name" value="NA-bd_OB-fold"/>
</dbReference>
<dbReference type="InterPro" id="IPR006032">
    <property type="entry name" value="Ribosomal_uS12"/>
</dbReference>
<dbReference type="InterPro" id="IPR005679">
    <property type="entry name" value="Ribosomal_uS12_bac"/>
</dbReference>
<dbReference type="NCBIfam" id="TIGR00981">
    <property type="entry name" value="rpsL_bact"/>
    <property type="match status" value="1"/>
</dbReference>
<dbReference type="PANTHER" id="PTHR11652">
    <property type="entry name" value="30S RIBOSOMAL PROTEIN S12 FAMILY MEMBER"/>
    <property type="match status" value="1"/>
</dbReference>
<dbReference type="Pfam" id="PF00164">
    <property type="entry name" value="Ribosom_S12_S23"/>
    <property type="match status" value="1"/>
</dbReference>
<dbReference type="PIRSF" id="PIRSF002133">
    <property type="entry name" value="Ribosomal_S12/S23"/>
    <property type="match status" value="1"/>
</dbReference>
<dbReference type="PRINTS" id="PR01034">
    <property type="entry name" value="RIBOSOMALS12"/>
</dbReference>
<dbReference type="SUPFAM" id="SSF50249">
    <property type="entry name" value="Nucleic acid-binding proteins"/>
    <property type="match status" value="1"/>
</dbReference>
<dbReference type="PROSITE" id="PS00055">
    <property type="entry name" value="RIBOSOMAL_S12"/>
    <property type="match status" value="1"/>
</dbReference>
<sequence>MPTINQLVRQGREVEKIKSKSPAMENSPQRRGVCTRVYTTTPKKPNSALRKVAKVRLTNGSEVISYIGGEGHNLQEHSVVLVRGGRVKDLPGVRYHIVRGSLDLQGVKDRKQARSKYGAKKPKAK</sequence>
<evidence type="ECO:0000250" key="1"/>
<evidence type="ECO:0000255" key="2">
    <source>
        <dbReference type="HAMAP-Rule" id="MF_00403"/>
    </source>
</evidence>
<evidence type="ECO:0000256" key="3">
    <source>
        <dbReference type="SAM" id="MobiDB-lite"/>
    </source>
</evidence>
<evidence type="ECO:0000305" key="4"/>
<organism>
    <name type="scientific">Verminephrobacter eiseniae (strain EF01-2)</name>
    <dbReference type="NCBI Taxonomy" id="391735"/>
    <lineage>
        <taxon>Bacteria</taxon>
        <taxon>Pseudomonadati</taxon>
        <taxon>Pseudomonadota</taxon>
        <taxon>Betaproteobacteria</taxon>
        <taxon>Burkholderiales</taxon>
        <taxon>Comamonadaceae</taxon>
        <taxon>Verminephrobacter</taxon>
    </lineage>
</organism>
<comment type="function">
    <text evidence="2">With S4 and S5 plays an important role in translational accuracy.</text>
</comment>
<comment type="function">
    <text evidence="2">Interacts with and stabilizes bases of the 16S rRNA that are involved in tRNA selection in the A site and with the mRNA backbone. Located at the interface of the 30S and 50S subunits, it traverses the body of the 30S subunit contacting proteins on the other side and probably holding the rRNA structure together. The combined cluster of proteins S8, S12 and S17 appears to hold together the shoulder and platform of the 30S subunit.</text>
</comment>
<comment type="subunit">
    <text evidence="2">Part of the 30S ribosomal subunit. Contacts proteins S8 and S17. May interact with IF1 in the 30S initiation complex.</text>
</comment>
<comment type="similarity">
    <text evidence="2">Belongs to the universal ribosomal protein uS12 family.</text>
</comment>
<proteinExistence type="inferred from homology"/>
<name>RS12_VEREI</name>
<protein>
    <recommendedName>
        <fullName evidence="2">Small ribosomal subunit protein uS12</fullName>
    </recommendedName>
    <alternativeName>
        <fullName evidence="4">30S ribosomal protein S12</fullName>
    </alternativeName>
</protein>
<keyword id="KW-0488">Methylation</keyword>
<keyword id="KW-1185">Reference proteome</keyword>
<keyword id="KW-0687">Ribonucleoprotein</keyword>
<keyword id="KW-0689">Ribosomal protein</keyword>
<keyword id="KW-0694">RNA-binding</keyword>
<keyword id="KW-0699">rRNA-binding</keyword>
<keyword id="KW-0820">tRNA-binding</keyword>
<accession>A1WHC0</accession>
<reference key="1">
    <citation type="submission" date="2006-12" db="EMBL/GenBank/DDBJ databases">
        <title>Complete sequence of chromosome 1 of Verminephrobacter eiseniae EF01-2.</title>
        <authorList>
            <person name="Copeland A."/>
            <person name="Lucas S."/>
            <person name="Lapidus A."/>
            <person name="Barry K."/>
            <person name="Detter J.C."/>
            <person name="Glavina del Rio T."/>
            <person name="Dalin E."/>
            <person name="Tice H."/>
            <person name="Pitluck S."/>
            <person name="Chertkov O."/>
            <person name="Brettin T."/>
            <person name="Bruce D."/>
            <person name="Han C."/>
            <person name="Tapia R."/>
            <person name="Gilna P."/>
            <person name="Schmutz J."/>
            <person name="Larimer F."/>
            <person name="Land M."/>
            <person name="Hauser L."/>
            <person name="Kyrpides N."/>
            <person name="Kim E."/>
            <person name="Stahl D."/>
            <person name="Richardson P."/>
        </authorList>
    </citation>
    <scope>NUCLEOTIDE SEQUENCE [LARGE SCALE GENOMIC DNA]</scope>
    <source>
        <strain>EF01-2</strain>
    </source>
</reference>
<gene>
    <name evidence="2" type="primary">rpsL</name>
    <name type="ordered locus">Veis_1259</name>
</gene>